<organism>
    <name type="scientific">Yersinia pseudotuberculosis serotype I (strain IP32953)</name>
    <dbReference type="NCBI Taxonomy" id="273123"/>
    <lineage>
        <taxon>Bacteria</taxon>
        <taxon>Pseudomonadati</taxon>
        <taxon>Pseudomonadota</taxon>
        <taxon>Gammaproteobacteria</taxon>
        <taxon>Enterobacterales</taxon>
        <taxon>Yersiniaceae</taxon>
        <taxon>Yersinia</taxon>
    </lineage>
</organism>
<proteinExistence type="inferred from homology"/>
<protein>
    <recommendedName>
        <fullName evidence="1">Secretion monitor</fullName>
    </recommendedName>
</protein>
<reference key="1">
    <citation type="journal article" date="2004" name="Proc. Natl. Acad. Sci. U.S.A.">
        <title>Insights into the evolution of Yersinia pestis through whole-genome comparison with Yersinia pseudotuberculosis.</title>
        <authorList>
            <person name="Chain P.S.G."/>
            <person name="Carniel E."/>
            <person name="Larimer F.W."/>
            <person name="Lamerdin J."/>
            <person name="Stoutland P.O."/>
            <person name="Regala W.M."/>
            <person name="Georgescu A.M."/>
            <person name="Vergez L.M."/>
            <person name="Land M.L."/>
            <person name="Motin V.L."/>
            <person name="Brubaker R.R."/>
            <person name="Fowler J."/>
            <person name="Hinnebusch J."/>
            <person name="Marceau M."/>
            <person name="Medigue C."/>
            <person name="Simonet M."/>
            <person name="Chenal-Francisque V."/>
            <person name="Souza B."/>
            <person name="Dacheux D."/>
            <person name="Elliott J.M."/>
            <person name="Derbise A."/>
            <person name="Hauser L.J."/>
            <person name="Garcia E."/>
        </authorList>
    </citation>
    <scope>NUCLEOTIDE SEQUENCE [LARGE SCALE GENOMIC DNA]</scope>
    <source>
        <strain>IP32953</strain>
    </source>
</reference>
<sequence>MIGILNRWRQFGRRYFWPHLLLGMVAASLGVPSNLSGVPDHAALANTSSSQSRQNHGTTNFNSLALLHDIHRRPSFSVDYWQQHALRTVIRHLSFALAPQAAYARVQEVAETERVAPSKIQQLALLDTLNALLTHEFKPPAIIRYTEQVERPVLSPYKPGLWLAQVQGIRAGPANLS</sequence>
<keyword id="KW-0963">Cytoplasm</keyword>
<keyword id="KW-0574">Periplasm</keyword>
<keyword id="KW-0732">Signal</keyword>
<name>SECM_YERPS</name>
<comment type="function">
    <text evidence="1">Regulates secA expression by translational coupling of the secM secA operon. Translational pausing at a specific Pro residue 5 residues before the end of the protein may allow disruption of a mRNA repressor helix that normally suppresses secA translation initiation.</text>
</comment>
<comment type="subcellular location">
    <subcellularLocation>
        <location evidence="1">Cytoplasm</location>
        <location evidence="1">Cytosol</location>
    </subcellularLocation>
    <subcellularLocation>
        <location evidence="1">Periplasm</location>
    </subcellularLocation>
    <text evidence="1">The active form is cytosolic, while the periplasmic form is rapidly degraded, mainly by the tail-specific protease.</text>
</comment>
<comment type="similarity">
    <text evidence="1">Belongs to the SecM family.</text>
</comment>
<comment type="sequence caution" evidence="2">
    <conflict type="erroneous initiation">
        <sequence resource="EMBL-CDS" id="CAH19936"/>
    </conflict>
</comment>
<dbReference type="EMBL" id="BX936398">
    <property type="protein sequence ID" value="CAH19936.1"/>
    <property type="status" value="ALT_INIT"/>
    <property type="molecule type" value="Genomic_DNA"/>
</dbReference>
<dbReference type="RefSeq" id="WP_011191738.1">
    <property type="nucleotide sequence ID" value="NC_006155.1"/>
</dbReference>
<dbReference type="KEGG" id="ypo:BZ17_1859"/>
<dbReference type="KEGG" id="yps:YPTB0696"/>
<dbReference type="PATRIC" id="fig|273123.14.peg.1973"/>
<dbReference type="Proteomes" id="UP000001011">
    <property type="component" value="Chromosome"/>
</dbReference>
<dbReference type="GO" id="GO:0005829">
    <property type="term" value="C:cytosol"/>
    <property type="evidence" value="ECO:0007669"/>
    <property type="project" value="UniProtKB-SubCell"/>
</dbReference>
<dbReference type="GO" id="GO:0042597">
    <property type="term" value="C:periplasmic space"/>
    <property type="evidence" value="ECO:0007669"/>
    <property type="project" value="UniProtKB-SubCell"/>
</dbReference>
<dbReference type="GO" id="GO:0045182">
    <property type="term" value="F:translation regulator activity"/>
    <property type="evidence" value="ECO:0007669"/>
    <property type="project" value="InterPro"/>
</dbReference>
<dbReference type="HAMAP" id="MF_01332">
    <property type="entry name" value="SecM"/>
    <property type="match status" value="1"/>
</dbReference>
<dbReference type="InterPro" id="IPR009502">
    <property type="entry name" value="SecM"/>
</dbReference>
<dbReference type="NCBIfam" id="NF002799">
    <property type="entry name" value="PRK02943.1-1"/>
    <property type="match status" value="1"/>
</dbReference>
<dbReference type="Pfam" id="PF06558">
    <property type="entry name" value="SecM"/>
    <property type="match status" value="1"/>
</dbReference>
<dbReference type="PIRSF" id="PIRSF004572">
    <property type="entry name" value="SecM"/>
    <property type="match status" value="1"/>
</dbReference>
<accession>Q66EJ7</accession>
<feature type="signal peptide" evidence="1">
    <location>
        <begin position="1"/>
        <end position="37"/>
    </location>
</feature>
<feature type="chain" id="PRO_0000042111" description="Secretion monitor">
    <location>
        <begin position="38"/>
        <end position="177"/>
    </location>
</feature>
<gene>
    <name evidence="1" type="primary">secM</name>
    <name type="ordered locus">YPTB0696</name>
</gene>
<evidence type="ECO:0000255" key="1">
    <source>
        <dbReference type="HAMAP-Rule" id="MF_01332"/>
    </source>
</evidence>
<evidence type="ECO:0000305" key="2"/>